<proteinExistence type="inferred from homology"/>
<feature type="chain" id="PRO_1000123636" description="Translational regulator CsrA">
    <location>
        <begin position="1"/>
        <end position="65"/>
    </location>
</feature>
<protein>
    <recommendedName>
        <fullName evidence="1">Translational regulator CsrA</fullName>
    </recommendedName>
    <alternativeName>
        <fullName evidence="1">Carbon storage regulator</fullName>
    </alternativeName>
</protein>
<comment type="function">
    <text evidence="1">A key translational regulator that binds mRNA to regulate translation initiation and/or mRNA stability. Mediates global changes in gene expression, shifting from rapid growth to stress survival by linking envelope stress, the stringent response and the catabolite repression systems. Usually binds in the 5'-UTR; binding at or near the Shine-Dalgarno sequence prevents ribosome-binding, repressing translation, binding elsewhere in the 5'-UTR can activate translation and/or stabilize the mRNA. Its function is antagonized by small RNA(s).</text>
</comment>
<comment type="subunit">
    <text evidence="1">Homodimer; the beta-strands of each monomer intercalate to form a hydrophobic core, while the alpha-helices form wings that extend away from the core.</text>
</comment>
<comment type="subcellular location">
    <subcellularLocation>
        <location evidence="1">Cytoplasm</location>
    </subcellularLocation>
</comment>
<comment type="similarity">
    <text evidence="1">Belongs to the CsrA/RsmA family.</text>
</comment>
<evidence type="ECO:0000255" key="1">
    <source>
        <dbReference type="HAMAP-Rule" id="MF_00167"/>
    </source>
</evidence>
<keyword id="KW-0010">Activator</keyword>
<keyword id="KW-0963">Cytoplasm</keyword>
<keyword id="KW-0678">Repressor</keyword>
<keyword id="KW-0694">RNA-binding</keyword>
<keyword id="KW-0810">Translation regulation</keyword>
<name>CSRA_VIBA3</name>
<sequence>MLILTRRVGETLMIGDEVTVTVLGVKGNQVRIGVNAPKEVSVHREEIYMRIQAEKGNGNVAPGNY</sequence>
<gene>
    <name evidence="1" type="primary">csrA</name>
    <name type="ordered locus">VS_2581</name>
</gene>
<dbReference type="EMBL" id="FM954972">
    <property type="protein sequence ID" value="CAV19760.1"/>
    <property type="molecule type" value="Genomic_DNA"/>
</dbReference>
<dbReference type="SMR" id="B7VK42"/>
<dbReference type="STRING" id="575788.VS_2581"/>
<dbReference type="KEGG" id="vsp:VS_2581"/>
<dbReference type="eggNOG" id="COG1551">
    <property type="taxonomic scope" value="Bacteria"/>
</dbReference>
<dbReference type="HOGENOM" id="CLU_164837_2_1_6"/>
<dbReference type="Proteomes" id="UP000009100">
    <property type="component" value="Chromosome 1"/>
</dbReference>
<dbReference type="GO" id="GO:0005829">
    <property type="term" value="C:cytosol"/>
    <property type="evidence" value="ECO:0007669"/>
    <property type="project" value="TreeGrafter"/>
</dbReference>
<dbReference type="GO" id="GO:0048027">
    <property type="term" value="F:mRNA 5'-UTR binding"/>
    <property type="evidence" value="ECO:0007669"/>
    <property type="project" value="UniProtKB-UniRule"/>
</dbReference>
<dbReference type="GO" id="GO:0006402">
    <property type="term" value="P:mRNA catabolic process"/>
    <property type="evidence" value="ECO:0007669"/>
    <property type="project" value="InterPro"/>
</dbReference>
<dbReference type="GO" id="GO:0045947">
    <property type="term" value="P:negative regulation of translational initiation"/>
    <property type="evidence" value="ECO:0007669"/>
    <property type="project" value="UniProtKB-UniRule"/>
</dbReference>
<dbReference type="GO" id="GO:0045948">
    <property type="term" value="P:positive regulation of translational initiation"/>
    <property type="evidence" value="ECO:0007669"/>
    <property type="project" value="UniProtKB-UniRule"/>
</dbReference>
<dbReference type="GO" id="GO:0006109">
    <property type="term" value="P:regulation of carbohydrate metabolic process"/>
    <property type="evidence" value="ECO:0007669"/>
    <property type="project" value="UniProtKB-UniRule"/>
</dbReference>
<dbReference type="FunFam" id="2.60.40.4380:FF:000001">
    <property type="entry name" value="Translational regulator CsrA"/>
    <property type="match status" value="1"/>
</dbReference>
<dbReference type="Gene3D" id="2.60.40.4380">
    <property type="entry name" value="Translational regulator CsrA"/>
    <property type="match status" value="1"/>
</dbReference>
<dbReference type="HAMAP" id="MF_00167">
    <property type="entry name" value="CsrA"/>
    <property type="match status" value="1"/>
</dbReference>
<dbReference type="InterPro" id="IPR003751">
    <property type="entry name" value="CsrA"/>
</dbReference>
<dbReference type="InterPro" id="IPR036107">
    <property type="entry name" value="CsrA_sf"/>
</dbReference>
<dbReference type="NCBIfam" id="TIGR00202">
    <property type="entry name" value="csrA"/>
    <property type="match status" value="1"/>
</dbReference>
<dbReference type="NCBIfam" id="NF002469">
    <property type="entry name" value="PRK01712.1"/>
    <property type="match status" value="1"/>
</dbReference>
<dbReference type="PANTHER" id="PTHR34984">
    <property type="entry name" value="CARBON STORAGE REGULATOR"/>
    <property type="match status" value="1"/>
</dbReference>
<dbReference type="PANTHER" id="PTHR34984:SF1">
    <property type="entry name" value="CARBON STORAGE REGULATOR"/>
    <property type="match status" value="1"/>
</dbReference>
<dbReference type="Pfam" id="PF02599">
    <property type="entry name" value="CsrA"/>
    <property type="match status" value="1"/>
</dbReference>
<dbReference type="SUPFAM" id="SSF117130">
    <property type="entry name" value="CsrA-like"/>
    <property type="match status" value="1"/>
</dbReference>
<reference key="1">
    <citation type="submission" date="2009-02" db="EMBL/GenBank/DDBJ databases">
        <title>Vibrio splendidus str. LGP32 complete genome.</title>
        <authorList>
            <person name="Mazel D."/>
            <person name="Le Roux F."/>
        </authorList>
    </citation>
    <scope>NUCLEOTIDE SEQUENCE [LARGE SCALE GENOMIC DNA]</scope>
    <source>
        <strain>LGP32</strain>
    </source>
</reference>
<accession>B7VK42</accession>
<organism>
    <name type="scientific">Vibrio atlanticus (strain LGP32)</name>
    <name type="common">Vibrio splendidus (strain Mel32)</name>
    <dbReference type="NCBI Taxonomy" id="575788"/>
    <lineage>
        <taxon>Bacteria</taxon>
        <taxon>Pseudomonadati</taxon>
        <taxon>Pseudomonadota</taxon>
        <taxon>Gammaproteobacteria</taxon>
        <taxon>Vibrionales</taxon>
        <taxon>Vibrionaceae</taxon>
        <taxon>Vibrio</taxon>
    </lineage>
</organism>